<organism>
    <name type="scientific">Periplaneta brunnea</name>
    <name type="common">Brown cockroach</name>
    <dbReference type="NCBI Taxonomy" id="36976"/>
    <lineage>
        <taxon>Eukaryota</taxon>
        <taxon>Metazoa</taxon>
        <taxon>Ecdysozoa</taxon>
        <taxon>Arthropoda</taxon>
        <taxon>Hexapoda</taxon>
        <taxon>Insecta</taxon>
        <taxon>Pterygota</taxon>
        <taxon>Neoptera</taxon>
        <taxon>Polyneoptera</taxon>
        <taxon>Dictyoptera</taxon>
        <taxon>Blattodea</taxon>
        <taxon>Blattoidea</taxon>
        <taxon>Blattidae</taxon>
        <taxon>Blattinae</taxon>
        <taxon>Periplaneta</taxon>
    </lineage>
</organism>
<reference evidence="5" key="1">
    <citation type="journal article" date="2009" name="BMC Evol. Biol.">
        <title>A proteomic approach for studying insect phylogeny: CAPA peptides of ancient insect taxa (Dictyoptera, Blattoptera) as a test case.</title>
        <authorList>
            <person name="Roth S."/>
            <person name="Fromm B."/>
            <person name="Gaede G."/>
            <person name="Predel R."/>
        </authorList>
    </citation>
    <scope>PROTEIN SEQUENCE</scope>
    <scope>AMIDATION AT PHE-11</scope>
    <source>
        <tissue evidence="3">Corpora cardiaca</tissue>
    </source>
</reference>
<dbReference type="GO" id="GO:0005576">
    <property type="term" value="C:extracellular region"/>
    <property type="evidence" value="ECO:0007669"/>
    <property type="project" value="UniProtKB-SubCell"/>
</dbReference>
<dbReference type="GO" id="GO:0005179">
    <property type="term" value="F:hormone activity"/>
    <property type="evidence" value="ECO:0007669"/>
    <property type="project" value="UniProtKB-KW"/>
</dbReference>
<dbReference type="GO" id="GO:0007218">
    <property type="term" value="P:neuropeptide signaling pathway"/>
    <property type="evidence" value="ECO:0007669"/>
    <property type="project" value="UniProtKB-KW"/>
</dbReference>
<dbReference type="InterPro" id="IPR013152">
    <property type="entry name" value="Gastrin/cholecystokinin_CS"/>
</dbReference>
<dbReference type="InterPro" id="IPR013259">
    <property type="entry name" value="Sulfakinin"/>
</dbReference>
<dbReference type="Pfam" id="PF08257">
    <property type="entry name" value="Sulfakinin"/>
    <property type="match status" value="1"/>
</dbReference>
<dbReference type="PROSITE" id="PS00259">
    <property type="entry name" value="GASTRIN"/>
    <property type="match status" value="1"/>
</dbReference>
<comment type="function">
    <text evidence="1">Myotropic peptide.</text>
</comment>
<comment type="subcellular location">
    <subcellularLocation>
        <location evidence="5">Secreted</location>
    </subcellularLocation>
</comment>
<comment type="similarity">
    <text evidence="2">Belongs to the gastrin/cholecystokinin family.</text>
</comment>
<proteinExistence type="evidence at protein level"/>
<protein>
    <recommendedName>
        <fullName evidence="4">Sulfakinin-1</fullName>
        <shortName evidence="4">PerBr-SK-1</shortName>
    </recommendedName>
</protein>
<keyword id="KW-0027">Amidation</keyword>
<keyword id="KW-0903">Direct protein sequencing</keyword>
<keyword id="KW-0372">Hormone</keyword>
<keyword id="KW-0527">Neuropeptide</keyword>
<keyword id="KW-0964">Secreted</keyword>
<keyword id="KW-0765">Sulfation</keyword>
<sequence>EQFDDYGHMRF</sequence>
<name>SK1_PERBR</name>
<feature type="peptide" id="PRO_0000378891" description="Sulfakinin-1" evidence="3">
    <location>
        <begin position="1"/>
        <end position="11"/>
    </location>
</feature>
<feature type="modified residue" description="Sulfotyrosine" evidence="1">
    <location>
        <position position="6"/>
    </location>
</feature>
<feature type="modified residue" description="Phenylalanine amide" evidence="3">
    <location>
        <position position="11"/>
    </location>
</feature>
<evidence type="ECO:0000250" key="1">
    <source>
        <dbReference type="UniProtKB" id="P41493"/>
    </source>
</evidence>
<evidence type="ECO:0000255" key="2"/>
<evidence type="ECO:0000269" key="3">
    <source>
    </source>
</evidence>
<evidence type="ECO:0000303" key="4">
    <source>
    </source>
</evidence>
<evidence type="ECO:0000305" key="5"/>
<accession>P85712</accession>